<dbReference type="EC" id="6.1.1.4" evidence="1"/>
<dbReference type="EMBL" id="CP000727">
    <property type="protein sequence ID" value="ABS36860.1"/>
    <property type="molecule type" value="Genomic_DNA"/>
</dbReference>
<dbReference type="EMBL" id="AM412317">
    <property type="protein sequence ID" value="CAL81738.1"/>
    <property type="molecule type" value="Genomic_DNA"/>
</dbReference>
<dbReference type="RefSeq" id="WP_011948005.1">
    <property type="nucleotide sequence ID" value="NC_009698.1"/>
</dbReference>
<dbReference type="RefSeq" id="YP_001252730.1">
    <property type="nucleotide sequence ID" value="NC_009495.1"/>
</dbReference>
<dbReference type="RefSeq" id="YP_001386143.1">
    <property type="nucleotide sequence ID" value="NC_009698.1"/>
</dbReference>
<dbReference type="SMR" id="A5HY79"/>
<dbReference type="GeneID" id="5187707"/>
<dbReference type="KEGG" id="cbh:CLC_0240"/>
<dbReference type="KEGG" id="cbo:CBO0186"/>
<dbReference type="PATRIC" id="fig|413999.7.peg.184"/>
<dbReference type="HOGENOM" id="CLU_004427_0_0_9"/>
<dbReference type="PRO" id="PR:A5HY79"/>
<dbReference type="Proteomes" id="UP000001986">
    <property type="component" value="Chromosome"/>
</dbReference>
<dbReference type="GO" id="GO:0005829">
    <property type="term" value="C:cytosol"/>
    <property type="evidence" value="ECO:0000318"/>
    <property type="project" value="GO_Central"/>
</dbReference>
<dbReference type="GO" id="GO:0002161">
    <property type="term" value="F:aminoacyl-tRNA deacylase activity"/>
    <property type="evidence" value="ECO:0007669"/>
    <property type="project" value="InterPro"/>
</dbReference>
<dbReference type="GO" id="GO:0005524">
    <property type="term" value="F:ATP binding"/>
    <property type="evidence" value="ECO:0007669"/>
    <property type="project" value="UniProtKB-UniRule"/>
</dbReference>
<dbReference type="GO" id="GO:0004823">
    <property type="term" value="F:leucine-tRNA ligase activity"/>
    <property type="evidence" value="ECO:0000318"/>
    <property type="project" value="GO_Central"/>
</dbReference>
<dbReference type="GO" id="GO:0006429">
    <property type="term" value="P:leucyl-tRNA aminoacylation"/>
    <property type="evidence" value="ECO:0000318"/>
    <property type="project" value="GO_Central"/>
</dbReference>
<dbReference type="CDD" id="cd07958">
    <property type="entry name" value="Anticodon_Ia_Leu_BEm"/>
    <property type="match status" value="1"/>
</dbReference>
<dbReference type="CDD" id="cd00812">
    <property type="entry name" value="LeuRS_core"/>
    <property type="match status" value="1"/>
</dbReference>
<dbReference type="FunFam" id="1.10.730.10:FF:000002">
    <property type="entry name" value="Leucine--tRNA ligase"/>
    <property type="match status" value="1"/>
</dbReference>
<dbReference type="FunFam" id="3.10.20.590:FF:000001">
    <property type="entry name" value="Leucine--tRNA ligase"/>
    <property type="match status" value="1"/>
</dbReference>
<dbReference type="FunFam" id="3.40.50.620:FF:000003">
    <property type="entry name" value="Leucine--tRNA ligase"/>
    <property type="match status" value="1"/>
</dbReference>
<dbReference type="FunFam" id="3.40.50.620:FF:000056">
    <property type="entry name" value="Leucine--tRNA ligase"/>
    <property type="match status" value="1"/>
</dbReference>
<dbReference type="Gene3D" id="3.10.20.590">
    <property type="match status" value="1"/>
</dbReference>
<dbReference type="Gene3D" id="3.40.50.620">
    <property type="entry name" value="HUPs"/>
    <property type="match status" value="2"/>
</dbReference>
<dbReference type="Gene3D" id="1.10.730.10">
    <property type="entry name" value="Isoleucyl-tRNA Synthetase, Domain 1"/>
    <property type="match status" value="1"/>
</dbReference>
<dbReference type="HAMAP" id="MF_00049_B">
    <property type="entry name" value="Leu_tRNA_synth_B"/>
    <property type="match status" value="1"/>
</dbReference>
<dbReference type="InterPro" id="IPR002300">
    <property type="entry name" value="aa-tRNA-synth_Ia"/>
</dbReference>
<dbReference type="InterPro" id="IPR002302">
    <property type="entry name" value="Leu-tRNA-ligase"/>
</dbReference>
<dbReference type="InterPro" id="IPR025709">
    <property type="entry name" value="Leu_tRNA-synth_edit"/>
</dbReference>
<dbReference type="InterPro" id="IPR013155">
    <property type="entry name" value="M/V/L/I-tRNA-synth_anticd-bd"/>
</dbReference>
<dbReference type="InterPro" id="IPR015413">
    <property type="entry name" value="Methionyl/Leucyl_tRNA_Synth"/>
</dbReference>
<dbReference type="InterPro" id="IPR014729">
    <property type="entry name" value="Rossmann-like_a/b/a_fold"/>
</dbReference>
<dbReference type="InterPro" id="IPR009080">
    <property type="entry name" value="tRNAsynth_Ia_anticodon-bd"/>
</dbReference>
<dbReference type="InterPro" id="IPR009008">
    <property type="entry name" value="Val/Leu/Ile-tRNA-synth_edit"/>
</dbReference>
<dbReference type="NCBIfam" id="TIGR00396">
    <property type="entry name" value="leuS_bact"/>
    <property type="match status" value="1"/>
</dbReference>
<dbReference type="PANTHER" id="PTHR43740:SF2">
    <property type="entry name" value="LEUCINE--TRNA LIGASE, MITOCHONDRIAL"/>
    <property type="match status" value="1"/>
</dbReference>
<dbReference type="PANTHER" id="PTHR43740">
    <property type="entry name" value="LEUCYL-TRNA SYNTHETASE"/>
    <property type="match status" value="1"/>
</dbReference>
<dbReference type="Pfam" id="PF08264">
    <property type="entry name" value="Anticodon_1"/>
    <property type="match status" value="1"/>
</dbReference>
<dbReference type="Pfam" id="PF00133">
    <property type="entry name" value="tRNA-synt_1"/>
    <property type="match status" value="1"/>
</dbReference>
<dbReference type="Pfam" id="PF13603">
    <property type="entry name" value="tRNA-synt_1_2"/>
    <property type="match status" value="1"/>
</dbReference>
<dbReference type="Pfam" id="PF09334">
    <property type="entry name" value="tRNA-synt_1g"/>
    <property type="match status" value="1"/>
</dbReference>
<dbReference type="PRINTS" id="PR00985">
    <property type="entry name" value="TRNASYNTHLEU"/>
</dbReference>
<dbReference type="SUPFAM" id="SSF47323">
    <property type="entry name" value="Anticodon-binding domain of a subclass of class I aminoacyl-tRNA synthetases"/>
    <property type="match status" value="1"/>
</dbReference>
<dbReference type="SUPFAM" id="SSF52374">
    <property type="entry name" value="Nucleotidylyl transferase"/>
    <property type="match status" value="1"/>
</dbReference>
<dbReference type="SUPFAM" id="SSF50677">
    <property type="entry name" value="ValRS/IleRS/LeuRS editing domain"/>
    <property type="match status" value="1"/>
</dbReference>
<comment type="catalytic activity">
    <reaction evidence="1">
        <text>tRNA(Leu) + L-leucine + ATP = L-leucyl-tRNA(Leu) + AMP + diphosphate</text>
        <dbReference type="Rhea" id="RHEA:11688"/>
        <dbReference type="Rhea" id="RHEA-COMP:9613"/>
        <dbReference type="Rhea" id="RHEA-COMP:9622"/>
        <dbReference type="ChEBI" id="CHEBI:30616"/>
        <dbReference type="ChEBI" id="CHEBI:33019"/>
        <dbReference type="ChEBI" id="CHEBI:57427"/>
        <dbReference type="ChEBI" id="CHEBI:78442"/>
        <dbReference type="ChEBI" id="CHEBI:78494"/>
        <dbReference type="ChEBI" id="CHEBI:456215"/>
        <dbReference type="EC" id="6.1.1.4"/>
    </reaction>
</comment>
<comment type="subcellular location">
    <subcellularLocation>
        <location evidence="1">Cytoplasm</location>
    </subcellularLocation>
</comment>
<comment type="similarity">
    <text evidence="1">Belongs to the class-I aminoacyl-tRNA synthetase family.</text>
</comment>
<organism>
    <name type="scientific">Clostridium botulinum (strain Hall / ATCC 3502 / NCTC 13319 / Type A)</name>
    <dbReference type="NCBI Taxonomy" id="441771"/>
    <lineage>
        <taxon>Bacteria</taxon>
        <taxon>Bacillati</taxon>
        <taxon>Bacillota</taxon>
        <taxon>Clostridia</taxon>
        <taxon>Eubacteriales</taxon>
        <taxon>Clostridiaceae</taxon>
        <taxon>Clostridium</taxon>
    </lineage>
</organism>
<sequence length="813" mass="92912">MGNYSTKIDEKWQKKWEENSLYKFNNKNLDKKLYVLEMFSYPSGSKLHAGHWFNYGPVDSWARFKRMQGYNVFQPMGFDAFGLPAENYAIKTGIHPKDSTFKNIETMETQLKAMGAMFNWENEVITCSPDYYKWTQWLFLKLYEKGLAYKKKAPVNWCPSCNTVLANEQVLDGKCERCDSNVDKKNLEQWFLKITDYADELLEKLDELDWPEKTKAMQKHWIGKSVGAEVTFNVADSDLSFNVFTTRVDTLFGVTYVVLAPENDLVDKLTTPENKAEVESYKTQAKNQSDIERQSITREKTGVFSGSYAINPINGKKVPIWIGDYVLNTYGTGCVMAVPAHDERDFAFATKYNLPIERVIEGGDSLPYTEYGGMVNSGEFDGLLGNEAKEAVISKLESMNLGRKKINYRLRDWLVSRQRYWGAPIPIIYCEKCGTVEVPIEQLPVELPYNVEFSPDGKSPLGKCDDFINTTCPKCGGPAKREADTLDTFVCSSWYYLRYPDNNNEKDAFNPELINKMLPVDKYVGGPEHACMHLLYARFITKALRDMGYLNFDEPFLSLTHQGLILGPDGLKMSKSKGNTISPDDYIKEFGADVFRMYLMFGFDYTEGGAWSDDAIKSIGKFVDRVERILENAREEIKNSKDNKSTMDKDEKELNYVRHHSIKSITEDIDKMQFNTSIARLMEFTNALSKYLGIDAIKNALFLRESIIDFITLLAPFAPHFAEEQWKLIGINSSIFNEKWPEFDPKALIKDEVEIAVQVNGKIRAKINISTSSSEDEIKESALNNEDIKNSIGDKEIKKVIVIKNRLVNIVAK</sequence>
<protein>
    <recommendedName>
        <fullName evidence="1">Leucine--tRNA ligase</fullName>
        <ecNumber evidence="1">6.1.1.4</ecNumber>
    </recommendedName>
    <alternativeName>
        <fullName evidence="1">Leucyl-tRNA synthetase</fullName>
        <shortName evidence="1">LeuRS</shortName>
    </alternativeName>
</protein>
<proteinExistence type="inferred from homology"/>
<feature type="chain" id="PRO_1000009326" description="Leucine--tRNA ligase">
    <location>
        <begin position="1"/>
        <end position="813"/>
    </location>
</feature>
<feature type="short sequence motif" description="'HIGH' region">
    <location>
        <begin position="40"/>
        <end position="51"/>
    </location>
</feature>
<feature type="short sequence motif" description="'KMSKS' region">
    <location>
        <begin position="572"/>
        <end position="576"/>
    </location>
</feature>
<feature type="binding site" evidence="1">
    <location>
        <position position="575"/>
    </location>
    <ligand>
        <name>ATP</name>
        <dbReference type="ChEBI" id="CHEBI:30616"/>
    </ligand>
</feature>
<keyword id="KW-0030">Aminoacyl-tRNA synthetase</keyword>
<keyword id="KW-0067">ATP-binding</keyword>
<keyword id="KW-0963">Cytoplasm</keyword>
<keyword id="KW-0436">Ligase</keyword>
<keyword id="KW-0547">Nucleotide-binding</keyword>
<keyword id="KW-0648">Protein biosynthesis</keyword>
<keyword id="KW-1185">Reference proteome</keyword>
<evidence type="ECO:0000255" key="1">
    <source>
        <dbReference type="HAMAP-Rule" id="MF_00049"/>
    </source>
</evidence>
<name>SYL_CLOBH</name>
<accession>A5HY79</accession>
<accession>A7G094</accession>
<reference key="1">
    <citation type="journal article" date="2007" name="Genome Res.">
        <title>Genome sequence of a proteolytic (Group I) Clostridium botulinum strain Hall A and comparative analysis of the clostridial genomes.</title>
        <authorList>
            <person name="Sebaihia M."/>
            <person name="Peck M.W."/>
            <person name="Minton N.P."/>
            <person name="Thomson N.R."/>
            <person name="Holden M.T.G."/>
            <person name="Mitchell W.J."/>
            <person name="Carter A.T."/>
            <person name="Bentley S.D."/>
            <person name="Mason D.R."/>
            <person name="Crossman L."/>
            <person name="Paul C.J."/>
            <person name="Ivens A."/>
            <person name="Wells-Bennik M.H.J."/>
            <person name="Davis I.J."/>
            <person name="Cerdeno-Tarraga A.M."/>
            <person name="Churcher C."/>
            <person name="Quail M.A."/>
            <person name="Chillingworth T."/>
            <person name="Feltwell T."/>
            <person name="Fraser A."/>
            <person name="Goodhead I."/>
            <person name="Hance Z."/>
            <person name="Jagels K."/>
            <person name="Larke N."/>
            <person name="Maddison M."/>
            <person name="Moule S."/>
            <person name="Mungall K."/>
            <person name="Norbertczak H."/>
            <person name="Rabbinowitsch E."/>
            <person name="Sanders M."/>
            <person name="Simmonds M."/>
            <person name="White B."/>
            <person name="Whithead S."/>
            <person name="Parkhill J."/>
        </authorList>
    </citation>
    <scope>NUCLEOTIDE SEQUENCE [LARGE SCALE GENOMIC DNA]</scope>
    <source>
        <strain>Hall / ATCC 3502 / NCTC 13319 / Type A</strain>
    </source>
</reference>
<reference key="2">
    <citation type="journal article" date="2007" name="PLoS ONE">
        <title>Analysis of the neurotoxin complex genes in Clostridium botulinum A1-A4 and B1 strains: BoNT/A3, /Ba4 and /B1 clusters are located within plasmids.</title>
        <authorList>
            <person name="Smith T.J."/>
            <person name="Hill K.K."/>
            <person name="Foley B.T."/>
            <person name="Detter J.C."/>
            <person name="Munk A.C."/>
            <person name="Bruce D.C."/>
            <person name="Doggett N.A."/>
            <person name="Smith L.A."/>
            <person name="Marks J.D."/>
            <person name="Xie G."/>
            <person name="Brettin T.S."/>
        </authorList>
    </citation>
    <scope>NUCLEOTIDE SEQUENCE [LARGE SCALE GENOMIC DNA]</scope>
    <source>
        <strain>Hall / ATCC 3502 / NCTC 13319 / Type A</strain>
    </source>
</reference>
<gene>
    <name evidence="1" type="primary">leuS</name>
    <name type="ordered locus">CBO0186</name>
    <name type="ordered locus">CLC_0240</name>
</gene>